<dbReference type="EMBL" id="CP000850">
    <property type="protein sequence ID" value="ABW00810.1"/>
    <property type="molecule type" value="Genomic_DNA"/>
</dbReference>
<dbReference type="SMR" id="A8LXG1"/>
<dbReference type="STRING" id="391037.Sare_5066"/>
<dbReference type="KEGG" id="saq:Sare_5066"/>
<dbReference type="eggNOG" id="COG0238">
    <property type="taxonomic scope" value="Bacteria"/>
</dbReference>
<dbReference type="HOGENOM" id="CLU_148710_1_0_11"/>
<dbReference type="OrthoDB" id="9812008at2"/>
<dbReference type="GO" id="GO:0022627">
    <property type="term" value="C:cytosolic small ribosomal subunit"/>
    <property type="evidence" value="ECO:0007669"/>
    <property type="project" value="TreeGrafter"/>
</dbReference>
<dbReference type="GO" id="GO:0070181">
    <property type="term" value="F:small ribosomal subunit rRNA binding"/>
    <property type="evidence" value="ECO:0007669"/>
    <property type="project" value="TreeGrafter"/>
</dbReference>
<dbReference type="GO" id="GO:0003735">
    <property type="term" value="F:structural constituent of ribosome"/>
    <property type="evidence" value="ECO:0007669"/>
    <property type="project" value="InterPro"/>
</dbReference>
<dbReference type="GO" id="GO:0006412">
    <property type="term" value="P:translation"/>
    <property type="evidence" value="ECO:0007669"/>
    <property type="project" value="UniProtKB-UniRule"/>
</dbReference>
<dbReference type="FunFam" id="4.10.640.10:FF:000016">
    <property type="entry name" value="30S ribosomal protein S18"/>
    <property type="match status" value="1"/>
</dbReference>
<dbReference type="Gene3D" id="4.10.640.10">
    <property type="entry name" value="Ribosomal protein S18"/>
    <property type="match status" value="1"/>
</dbReference>
<dbReference type="HAMAP" id="MF_00270">
    <property type="entry name" value="Ribosomal_bS18"/>
    <property type="match status" value="1"/>
</dbReference>
<dbReference type="InterPro" id="IPR001648">
    <property type="entry name" value="Ribosomal_bS18"/>
</dbReference>
<dbReference type="InterPro" id="IPR018275">
    <property type="entry name" value="Ribosomal_bS18_CS"/>
</dbReference>
<dbReference type="InterPro" id="IPR036870">
    <property type="entry name" value="Ribosomal_bS18_sf"/>
</dbReference>
<dbReference type="NCBIfam" id="TIGR00165">
    <property type="entry name" value="S18"/>
    <property type="match status" value="1"/>
</dbReference>
<dbReference type="PANTHER" id="PTHR13479">
    <property type="entry name" value="30S RIBOSOMAL PROTEIN S18"/>
    <property type="match status" value="1"/>
</dbReference>
<dbReference type="PANTHER" id="PTHR13479:SF40">
    <property type="entry name" value="SMALL RIBOSOMAL SUBUNIT PROTEIN BS18M"/>
    <property type="match status" value="1"/>
</dbReference>
<dbReference type="Pfam" id="PF01084">
    <property type="entry name" value="Ribosomal_S18"/>
    <property type="match status" value="1"/>
</dbReference>
<dbReference type="PRINTS" id="PR00974">
    <property type="entry name" value="RIBOSOMALS18"/>
</dbReference>
<dbReference type="SUPFAM" id="SSF46911">
    <property type="entry name" value="Ribosomal protein S18"/>
    <property type="match status" value="1"/>
</dbReference>
<dbReference type="PROSITE" id="PS00057">
    <property type="entry name" value="RIBOSOMAL_S18"/>
    <property type="match status" value="1"/>
</dbReference>
<reference key="1">
    <citation type="submission" date="2007-10" db="EMBL/GenBank/DDBJ databases">
        <title>Complete sequence of Salinispora arenicola CNS-205.</title>
        <authorList>
            <consortium name="US DOE Joint Genome Institute"/>
            <person name="Copeland A."/>
            <person name="Lucas S."/>
            <person name="Lapidus A."/>
            <person name="Barry K."/>
            <person name="Glavina del Rio T."/>
            <person name="Dalin E."/>
            <person name="Tice H."/>
            <person name="Pitluck S."/>
            <person name="Foster B."/>
            <person name="Schmutz J."/>
            <person name="Larimer F."/>
            <person name="Land M."/>
            <person name="Hauser L."/>
            <person name="Kyrpides N."/>
            <person name="Ivanova N."/>
            <person name="Jensen P.R."/>
            <person name="Moore B.S."/>
            <person name="Penn K."/>
            <person name="Jenkins C."/>
            <person name="Udwary D."/>
            <person name="Xiang L."/>
            <person name="Gontang E."/>
            <person name="Richardson P."/>
        </authorList>
    </citation>
    <scope>NUCLEOTIDE SEQUENCE [LARGE SCALE GENOMIC DNA]</scope>
    <source>
        <strain>CNS-205</strain>
    </source>
</reference>
<organism>
    <name type="scientific">Salinispora arenicola (strain CNS-205)</name>
    <dbReference type="NCBI Taxonomy" id="391037"/>
    <lineage>
        <taxon>Bacteria</taxon>
        <taxon>Bacillati</taxon>
        <taxon>Actinomycetota</taxon>
        <taxon>Actinomycetes</taxon>
        <taxon>Micromonosporales</taxon>
        <taxon>Micromonosporaceae</taxon>
        <taxon>Salinispora</taxon>
    </lineage>
</organism>
<sequence>MAKAAALRKPKKKVNPLDKDGITYIDYKDTALLRKFISDRGKIRARRVTGVTSQQQRQIARAVKNAREMALLPYTATAR</sequence>
<evidence type="ECO:0000255" key="1">
    <source>
        <dbReference type="HAMAP-Rule" id="MF_00270"/>
    </source>
</evidence>
<evidence type="ECO:0000305" key="2"/>
<name>RS18_SALAI</name>
<accession>A8LXG1</accession>
<comment type="function">
    <text evidence="1">Binds as a heterodimer with protein bS6 to the central domain of the 16S rRNA, where it helps stabilize the platform of the 30S subunit.</text>
</comment>
<comment type="subunit">
    <text evidence="1">Part of the 30S ribosomal subunit. Forms a tight heterodimer with protein bS6.</text>
</comment>
<comment type="similarity">
    <text evidence="1">Belongs to the bacterial ribosomal protein bS18 family.</text>
</comment>
<feature type="chain" id="PRO_0000345544" description="Small ribosomal subunit protein bS18">
    <location>
        <begin position="1"/>
        <end position="79"/>
    </location>
</feature>
<keyword id="KW-0687">Ribonucleoprotein</keyword>
<keyword id="KW-0689">Ribosomal protein</keyword>
<keyword id="KW-0694">RNA-binding</keyword>
<keyword id="KW-0699">rRNA-binding</keyword>
<gene>
    <name evidence="1" type="primary">rpsR</name>
    <name type="ordered locus">Sare_5066</name>
</gene>
<protein>
    <recommendedName>
        <fullName evidence="1">Small ribosomal subunit protein bS18</fullName>
    </recommendedName>
    <alternativeName>
        <fullName evidence="2">30S ribosomal protein S18</fullName>
    </alternativeName>
</protein>
<proteinExistence type="inferred from homology"/>